<keyword id="KW-0004">4Fe-4S</keyword>
<keyword id="KW-0067">ATP-binding</keyword>
<keyword id="KW-0963">Cytoplasm</keyword>
<keyword id="KW-0408">Iron</keyword>
<keyword id="KW-0411">Iron-sulfur</keyword>
<keyword id="KW-0460">Magnesium</keyword>
<keyword id="KW-0479">Metal-binding</keyword>
<keyword id="KW-0547">Nucleotide-binding</keyword>
<keyword id="KW-1185">Reference proteome</keyword>
<keyword id="KW-0694">RNA-binding</keyword>
<keyword id="KW-0808">Transferase</keyword>
<keyword id="KW-0819">tRNA processing</keyword>
<keyword id="KW-0820">tRNA-binding</keyword>
<feature type="chain" id="PRO_0000168908" description="tRNA-cytidine(32) 2-sulfurtransferase">
    <location>
        <begin position="1"/>
        <end position="313"/>
    </location>
</feature>
<feature type="short sequence motif" description="PP-loop motif" evidence="1">
    <location>
        <begin position="50"/>
        <end position="55"/>
    </location>
</feature>
<feature type="binding site" evidence="1">
    <location>
        <position position="125"/>
    </location>
    <ligand>
        <name>[4Fe-4S] cluster</name>
        <dbReference type="ChEBI" id="CHEBI:49883"/>
    </ligand>
</feature>
<feature type="binding site" evidence="1">
    <location>
        <position position="128"/>
    </location>
    <ligand>
        <name>[4Fe-4S] cluster</name>
        <dbReference type="ChEBI" id="CHEBI:49883"/>
    </ligand>
</feature>
<feature type="binding site" evidence="1">
    <location>
        <position position="216"/>
    </location>
    <ligand>
        <name>[4Fe-4S] cluster</name>
        <dbReference type="ChEBI" id="CHEBI:49883"/>
    </ligand>
</feature>
<name>TTCA_HAEIN</name>
<evidence type="ECO:0000255" key="1">
    <source>
        <dbReference type="HAMAP-Rule" id="MF_01850"/>
    </source>
</evidence>
<sequence length="313" mass="35703">MSELTQLAQQEKKQTYNFNKLQKRLRRNVGNAIADFGMIEDGDKVMVCLSGGKDSYTLLDILLNLQQSAPIKFDIVAVNLDQKQPGFPEHVLPEYLESIGVDYKIVQENTYGIVKEKIPEGKTTCSLCSRLRRGILYRTATELGATKIALGHHRDDMLATLFLNMFYGGKIKSMPPKLISDDGKQIVIRPLAYCKEKDIEKYAIAKEFPIIPCNLCGSQPNLQRQVVKEMLNTWDRQYPGRLETMFSAMQNITLSHMCDPKLFDFKGIKHGQLIDGIEGDTAFDEERITPMQFEDEDQTDFSNKEMINFKEVN</sequence>
<organism>
    <name type="scientific">Haemophilus influenzae (strain ATCC 51907 / DSM 11121 / KW20 / Rd)</name>
    <dbReference type="NCBI Taxonomy" id="71421"/>
    <lineage>
        <taxon>Bacteria</taxon>
        <taxon>Pseudomonadati</taxon>
        <taxon>Pseudomonadota</taxon>
        <taxon>Gammaproteobacteria</taxon>
        <taxon>Pasteurellales</taxon>
        <taxon>Pasteurellaceae</taxon>
        <taxon>Haemophilus</taxon>
    </lineage>
</organism>
<protein>
    <recommendedName>
        <fullName evidence="1">tRNA-cytidine(32) 2-sulfurtransferase</fullName>
        <ecNumber evidence="1">2.8.1.-</ecNumber>
    </recommendedName>
    <alternativeName>
        <fullName evidence="1">Two-thiocytidine biosynthesis protein A</fullName>
    </alternativeName>
    <alternativeName>
        <fullName evidence="1">tRNA 2-thiocytidine biosynthesis protein TtcA</fullName>
    </alternativeName>
</protein>
<proteinExistence type="inferred from homology"/>
<accession>Q57184</accession>
<accession>O05059</accession>
<comment type="function">
    <text evidence="1">Catalyzes the ATP-dependent 2-thiolation of cytidine in position 32 of tRNA, to form 2-thiocytidine (s(2)C32). The sulfur atoms are provided by the cysteine/cysteine desulfurase (IscS) system.</text>
</comment>
<comment type="catalytic activity">
    <reaction evidence="1">
        <text>cytidine(32) in tRNA + S-sulfanyl-L-cysteinyl-[cysteine desulfurase] + AH2 + ATP = 2-thiocytidine(32) in tRNA + L-cysteinyl-[cysteine desulfurase] + A + AMP + diphosphate + H(+)</text>
        <dbReference type="Rhea" id="RHEA:57048"/>
        <dbReference type="Rhea" id="RHEA-COMP:10288"/>
        <dbReference type="Rhea" id="RHEA-COMP:12157"/>
        <dbReference type="Rhea" id="RHEA-COMP:12158"/>
        <dbReference type="Rhea" id="RHEA-COMP:14821"/>
        <dbReference type="ChEBI" id="CHEBI:13193"/>
        <dbReference type="ChEBI" id="CHEBI:15378"/>
        <dbReference type="ChEBI" id="CHEBI:17499"/>
        <dbReference type="ChEBI" id="CHEBI:29950"/>
        <dbReference type="ChEBI" id="CHEBI:30616"/>
        <dbReference type="ChEBI" id="CHEBI:33019"/>
        <dbReference type="ChEBI" id="CHEBI:61963"/>
        <dbReference type="ChEBI" id="CHEBI:82748"/>
        <dbReference type="ChEBI" id="CHEBI:141453"/>
        <dbReference type="ChEBI" id="CHEBI:456215"/>
    </reaction>
    <physiologicalReaction direction="left-to-right" evidence="1">
        <dbReference type="Rhea" id="RHEA:57049"/>
    </physiologicalReaction>
</comment>
<comment type="cofactor">
    <cofactor evidence="1">
        <name>Mg(2+)</name>
        <dbReference type="ChEBI" id="CHEBI:18420"/>
    </cofactor>
</comment>
<comment type="cofactor">
    <cofactor evidence="1">
        <name>[4Fe-4S] cluster</name>
        <dbReference type="ChEBI" id="CHEBI:49883"/>
    </cofactor>
    <text evidence="1">Binds 1 [4Fe-4S] cluster per subunit. The cluster is chelated by three Cys residues, the fourth Fe has a free coordination site that may bind a sulfur atom transferred from the persulfide of IscS.</text>
</comment>
<comment type="pathway">
    <text evidence="1">tRNA modification.</text>
</comment>
<comment type="subunit">
    <text evidence="1">Homodimer.</text>
</comment>
<comment type="subcellular location">
    <subcellularLocation>
        <location evidence="1">Cytoplasm</location>
    </subcellularLocation>
</comment>
<comment type="miscellaneous">
    <text evidence="1">The thiolation reaction likely consists of two steps: a first activation step by ATP to form an adenylated intermediate of the target base of tRNA, and a second nucleophilic substitution step of the sulfur (S) atom supplied by the hydrosulfide attached to the Fe-S cluster.</text>
</comment>
<comment type="similarity">
    <text evidence="1">Belongs to the TtcA family.</text>
</comment>
<dbReference type="EC" id="2.8.1.-" evidence="1"/>
<dbReference type="EMBL" id="L42023">
    <property type="protein sequence ID" value="AAC23019.1"/>
    <property type="molecule type" value="Genomic_DNA"/>
</dbReference>
<dbReference type="RefSeq" id="NP_439523.1">
    <property type="nucleotide sequence ID" value="NC_000907.1"/>
</dbReference>
<dbReference type="SMR" id="Q57184"/>
<dbReference type="STRING" id="71421.HI_1371.1"/>
<dbReference type="EnsemblBacteria" id="AAC23019">
    <property type="protein sequence ID" value="AAC23019"/>
    <property type="gene ID" value="HI_1371.1"/>
</dbReference>
<dbReference type="KEGG" id="hin:HI_1371.1"/>
<dbReference type="PATRIC" id="fig|71421.8.peg.1426"/>
<dbReference type="eggNOG" id="COG0037">
    <property type="taxonomic scope" value="Bacteria"/>
</dbReference>
<dbReference type="HOGENOM" id="CLU_026481_0_0_6"/>
<dbReference type="OrthoDB" id="9801054at2"/>
<dbReference type="PhylomeDB" id="Q57184"/>
<dbReference type="BioCyc" id="HINF71421:G1GJ1-1397-MONOMER"/>
<dbReference type="Proteomes" id="UP000000579">
    <property type="component" value="Chromosome"/>
</dbReference>
<dbReference type="GO" id="GO:0005829">
    <property type="term" value="C:cytosol"/>
    <property type="evidence" value="ECO:0000318"/>
    <property type="project" value="GO_Central"/>
</dbReference>
<dbReference type="GO" id="GO:0051539">
    <property type="term" value="F:4 iron, 4 sulfur cluster binding"/>
    <property type="evidence" value="ECO:0007669"/>
    <property type="project" value="UniProtKB-UniRule"/>
</dbReference>
<dbReference type="GO" id="GO:0005524">
    <property type="term" value="F:ATP binding"/>
    <property type="evidence" value="ECO:0007669"/>
    <property type="project" value="UniProtKB-UniRule"/>
</dbReference>
<dbReference type="GO" id="GO:0000287">
    <property type="term" value="F:magnesium ion binding"/>
    <property type="evidence" value="ECO:0007669"/>
    <property type="project" value="UniProtKB-UniRule"/>
</dbReference>
<dbReference type="GO" id="GO:0016783">
    <property type="term" value="F:sulfurtransferase activity"/>
    <property type="evidence" value="ECO:0000318"/>
    <property type="project" value="GO_Central"/>
</dbReference>
<dbReference type="GO" id="GO:0000049">
    <property type="term" value="F:tRNA binding"/>
    <property type="evidence" value="ECO:0007669"/>
    <property type="project" value="UniProtKB-KW"/>
</dbReference>
<dbReference type="GO" id="GO:0034227">
    <property type="term" value="P:tRNA thio-modification"/>
    <property type="evidence" value="ECO:0000318"/>
    <property type="project" value="GO_Central"/>
</dbReference>
<dbReference type="CDD" id="cd24138">
    <property type="entry name" value="TtcA-like"/>
    <property type="match status" value="1"/>
</dbReference>
<dbReference type="Gene3D" id="3.40.50.620">
    <property type="entry name" value="HUPs"/>
    <property type="match status" value="1"/>
</dbReference>
<dbReference type="HAMAP" id="MF_01850">
    <property type="entry name" value="TtcA"/>
    <property type="match status" value="1"/>
</dbReference>
<dbReference type="InterPro" id="IPR014729">
    <property type="entry name" value="Rossmann-like_a/b/a_fold"/>
</dbReference>
<dbReference type="InterPro" id="IPR011063">
    <property type="entry name" value="TilS/TtcA_N"/>
</dbReference>
<dbReference type="InterPro" id="IPR012089">
    <property type="entry name" value="tRNA_Cyd_32_2_STrfase"/>
</dbReference>
<dbReference type="InterPro" id="IPR035107">
    <property type="entry name" value="tRNA_thiolation_TtcA_Ctu1"/>
</dbReference>
<dbReference type="NCBIfam" id="NF007972">
    <property type="entry name" value="PRK10696.1"/>
    <property type="match status" value="1"/>
</dbReference>
<dbReference type="PANTHER" id="PTHR43686:SF1">
    <property type="entry name" value="AMINOTRAN_5 DOMAIN-CONTAINING PROTEIN"/>
    <property type="match status" value="1"/>
</dbReference>
<dbReference type="PANTHER" id="PTHR43686">
    <property type="entry name" value="SULFURTRANSFERASE-RELATED"/>
    <property type="match status" value="1"/>
</dbReference>
<dbReference type="Pfam" id="PF01171">
    <property type="entry name" value="ATP_bind_3"/>
    <property type="match status" value="1"/>
</dbReference>
<dbReference type="PIRSF" id="PIRSF004976">
    <property type="entry name" value="ATPase_YdaO"/>
    <property type="match status" value="1"/>
</dbReference>
<dbReference type="SUPFAM" id="SSF52402">
    <property type="entry name" value="Adenine nucleotide alpha hydrolases-like"/>
    <property type="match status" value="1"/>
</dbReference>
<reference key="1">
    <citation type="journal article" date="1995" name="Science">
        <title>Whole-genome random sequencing and assembly of Haemophilus influenzae Rd.</title>
        <authorList>
            <person name="Fleischmann R.D."/>
            <person name="Adams M.D."/>
            <person name="White O."/>
            <person name="Clayton R.A."/>
            <person name="Kirkness E.F."/>
            <person name="Kerlavage A.R."/>
            <person name="Bult C.J."/>
            <person name="Tomb J.-F."/>
            <person name="Dougherty B.A."/>
            <person name="Merrick J.M."/>
            <person name="McKenney K."/>
            <person name="Sutton G.G."/>
            <person name="FitzHugh W."/>
            <person name="Fields C.A."/>
            <person name="Gocayne J.D."/>
            <person name="Scott J.D."/>
            <person name="Shirley R."/>
            <person name="Liu L.-I."/>
            <person name="Glodek A."/>
            <person name="Kelley J.M."/>
            <person name="Weidman J.F."/>
            <person name="Phillips C.A."/>
            <person name="Spriggs T."/>
            <person name="Hedblom E."/>
            <person name="Cotton M.D."/>
            <person name="Utterback T.R."/>
            <person name="Hanna M.C."/>
            <person name="Nguyen D.T."/>
            <person name="Saudek D.M."/>
            <person name="Brandon R.C."/>
            <person name="Fine L.D."/>
            <person name="Fritchman J.L."/>
            <person name="Fuhrmann J.L."/>
            <person name="Geoghagen N.S.M."/>
            <person name="Gnehm C.L."/>
            <person name="McDonald L.A."/>
            <person name="Small K.V."/>
            <person name="Fraser C.M."/>
            <person name="Smith H.O."/>
            <person name="Venter J.C."/>
        </authorList>
    </citation>
    <scope>NUCLEOTIDE SEQUENCE [LARGE SCALE GENOMIC DNA]</scope>
    <source>
        <strain>ATCC 51907 / DSM 11121 / KW20 / Rd</strain>
    </source>
</reference>
<reference key="2">
    <citation type="submission" date="1996-09" db="EMBL/GenBank/DDBJ databases">
        <authorList>
            <person name="White O."/>
            <person name="Clayton R.A."/>
            <person name="Kerlavage A.R."/>
            <person name="Fleischmann R.D."/>
        </authorList>
    </citation>
    <scope>SEQUENCE REVISION</scope>
</reference>
<gene>
    <name evidence="1" type="primary">ttcA</name>
    <name type="ordered locus">HI_1371.1</name>
</gene>